<name>YHIT_RICPR</name>
<reference key="1">
    <citation type="journal article" date="1998" name="Nature">
        <title>The genome sequence of Rickettsia prowazekii and the origin of mitochondria.</title>
        <authorList>
            <person name="Andersson S.G.E."/>
            <person name="Zomorodipour A."/>
            <person name="Andersson J.O."/>
            <person name="Sicheritz-Ponten T."/>
            <person name="Alsmark U.C.M."/>
            <person name="Podowski R.M."/>
            <person name="Naeslund A.K."/>
            <person name="Eriksson A.-S."/>
            <person name="Winkler H.H."/>
            <person name="Kurland C.G."/>
        </authorList>
    </citation>
    <scope>NUCLEOTIDE SEQUENCE [LARGE SCALE GENOMIC DNA]</scope>
    <source>
        <strain>Madrid E</strain>
    </source>
</reference>
<proteinExistence type="predicted"/>
<gene>
    <name type="ordered locus">RP317</name>
</gene>
<keyword id="KW-1185">Reference proteome</keyword>
<accession>Q9ZDL1</accession>
<sequence>MYNKENVFAKIITKNLPAEIIYEDKQILAFKDIAPIAPVHIIVIPKNEYIDYTDFISKASIDEIKHFFSKIADIANEAGLDKVGYRLITNKGEKSGQTIFHFHFHIIGGKKLIGLINNND</sequence>
<feature type="chain" id="PRO_0000109827" description="Uncharacterized HIT-like protein RP317">
    <location>
        <begin position="1"/>
        <end position="120"/>
    </location>
</feature>
<feature type="domain" description="HIT" evidence="1">
    <location>
        <begin position="7"/>
        <end position="120"/>
    </location>
</feature>
<feature type="short sequence motif" description="Histidine triad motif">
    <location>
        <begin position="101"/>
        <end position="105"/>
    </location>
</feature>
<evidence type="ECO:0000255" key="1">
    <source>
        <dbReference type="PROSITE-ProRule" id="PRU00464"/>
    </source>
</evidence>
<protein>
    <recommendedName>
        <fullName>Uncharacterized HIT-like protein RP317</fullName>
    </recommendedName>
</protein>
<dbReference type="EMBL" id="AJ235271">
    <property type="protein sequence ID" value="CAA14777.1"/>
    <property type="molecule type" value="Genomic_DNA"/>
</dbReference>
<dbReference type="PIR" id="G71687">
    <property type="entry name" value="G71687"/>
</dbReference>
<dbReference type="RefSeq" id="NP_220700.1">
    <property type="nucleotide sequence ID" value="NC_000963.1"/>
</dbReference>
<dbReference type="RefSeq" id="WP_004597422.1">
    <property type="nucleotide sequence ID" value="NC_000963.1"/>
</dbReference>
<dbReference type="SMR" id="Q9ZDL1"/>
<dbReference type="STRING" id="272947.gene:17555397"/>
<dbReference type="EnsemblBacteria" id="CAA14777">
    <property type="protein sequence ID" value="CAA14777"/>
    <property type="gene ID" value="CAA14777"/>
</dbReference>
<dbReference type="KEGG" id="rpr:RP317"/>
<dbReference type="PATRIC" id="fig|272947.5.peg.326"/>
<dbReference type="eggNOG" id="COG0537">
    <property type="taxonomic scope" value="Bacteria"/>
</dbReference>
<dbReference type="HOGENOM" id="CLU_056776_8_1_5"/>
<dbReference type="OrthoDB" id="9784774at2"/>
<dbReference type="Proteomes" id="UP000002480">
    <property type="component" value="Chromosome"/>
</dbReference>
<dbReference type="GO" id="GO:0003824">
    <property type="term" value="F:catalytic activity"/>
    <property type="evidence" value="ECO:0007669"/>
    <property type="project" value="InterPro"/>
</dbReference>
<dbReference type="Gene3D" id="3.30.428.10">
    <property type="entry name" value="HIT-like"/>
    <property type="match status" value="1"/>
</dbReference>
<dbReference type="InterPro" id="IPR019808">
    <property type="entry name" value="Histidine_triad_CS"/>
</dbReference>
<dbReference type="InterPro" id="IPR001310">
    <property type="entry name" value="Histidine_triad_HIT"/>
</dbReference>
<dbReference type="InterPro" id="IPR011146">
    <property type="entry name" value="HIT-like"/>
</dbReference>
<dbReference type="InterPro" id="IPR036265">
    <property type="entry name" value="HIT-like_sf"/>
</dbReference>
<dbReference type="PANTHER" id="PTHR23089">
    <property type="entry name" value="HISTIDINE TRIAD HIT PROTEIN"/>
    <property type="match status" value="1"/>
</dbReference>
<dbReference type="Pfam" id="PF01230">
    <property type="entry name" value="HIT"/>
    <property type="match status" value="1"/>
</dbReference>
<dbReference type="PRINTS" id="PR00332">
    <property type="entry name" value="HISTRIAD"/>
</dbReference>
<dbReference type="SUPFAM" id="SSF54197">
    <property type="entry name" value="HIT-like"/>
    <property type="match status" value="1"/>
</dbReference>
<dbReference type="PROSITE" id="PS00892">
    <property type="entry name" value="HIT_1"/>
    <property type="match status" value="1"/>
</dbReference>
<dbReference type="PROSITE" id="PS51084">
    <property type="entry name" value="HIT_2"/>
    <property type="match status" value="1"/>
</dbReference>
<organism>
    <name type="scientific">Rickettsia prowazekii (strain Madrid E)</name>
    <dbReference type="NCBI Taxonomy" id="272947"/>
    <lineage>
        <taxon>Bacteria</taxon>
        <taxon>Pseudomonadati</taxon>
        <taxon>Pseudomonadota</taxon>
        <taxon>Alphaproteobacteria</taxon>
        <taxon>Rickettsiales</taxon>
        <taxon>Rickettsiaceae</taxon>
        <taxon>Rickettsieae</taxon>
        <taxon>Rickettsia</taxon>
        <taxon>typhus group</taxon>
    </lineage>
</organism>